<reference key="1">
    <citation type="journal article" date="2007" name="Genome Res.">
        <title>Reductive evolution and niche adaptation inferred from the genome of Mycobacterium ulcerans, the causative agent of Buruli ulcer.</title>
        <authorList>
            <person name="Stinear T.P."/>
            <person name="Seemann T."/>
            <person name="Pidot S."/>
            <person name="Frigui W."/>
            <person name="Reysset G."/>
            <person name="Garnier T."/>
            <person name="Meurice G."/>
            <person name="Simon D."/>
            <person name="Bouchier C."/>
            <person name="Ma L."/>
            <person name="Tichit M."/>
            <person name="Porter J.L."/>
            <person name="Ryan J."/>
            <person name="Johnson P.D.R."/>
            <person name="Davies J.K."/>
            <person name="Jenkin G.A."/>
            <person name="Small P.L.C."/>
            <person name="Jones L.M."/>
            <person name="Tekaia F."/>
            <person name="Laval F."/>
            <person name="Daffe M."/>
            <person name="Parkhill J."/>
            <person name="Cole S.T."/>
        </authorList>
    </citation>
    <scope>NUCLEOTIDE SEQUENCE [LARGE SCALE GENOMIC DNA]</scope>
    <source>
        <strain>Agy99</strain>
    </source>
</reference>
<accession>A0PV50</accession>
<sequence length="315" mass="33322">MRANAGRAPVFKPGELNVYSAPRDVGEVSRALRHTGRRVMLVPTMGALHEGHLALVRAAKRTPGAVVVVSIFVNPLQFGAGEDLDAYPRTLDQDLAKLRAEGVEIAFTPTAASMYPNGLRTTVQPGPMAAELEGGSRPTHFAGVLTVVLKLLQIVAPDRAFFGEKDYQQLVLIRQMVADLNVNVQVIGVPIVREHDGLAMSSRNRYLDPAQREAAIALSAALTAGAHAATAGVQAALDAARGVLEAVPGIVVDYVELRDGELGPVSPSGSGRLLVAVRFGTTRLLDNVAIEIESIAGTDGQPVGPDGRVQSPWRN</sequence>
<dbReference type="EC" id="6.3.2.1" evidence="1"/>
<dbReference type="EMBL" id="CP000325">
    <property type="protein sequence ID" value="ABL06219.1"/>
    <property type="molecule type" value="Genomic_DNA"/>
</dbReference>
<dbReference type="RefSeq" id="WP_011741822.1">
    <property type="nucleotide sequence ID" value="NC_008611.1"/>
</dbReference>
<dbReference type="SMR" id="A0PV50"/>
<dbReference type="KEGG" id="mul:MUL_4184"/>
<dbReference type="eggNOG" id="COG0414">
    <property type="taxonomic scope" value="Bacteria"/>
</dbReference>
<dbReference type="HOGENOM" id="CLU_047148_0_2_11"/>
<dbReference type="UniPathway" id="UPA00028">
    <property type="reaction ID" value="UER00005"/>
</dbReference>
<dbReference type="Proteomes" id="UP000000765">
    <property type="component" value="Chromosome"/>
</dbReference>
<dbReference type="GO" id="GO:0005829">
    <property type="term" value="C:cytosol"/>
    <property type="evidence" value="ECO:0007669"/>
    <property type="project" value="TreeGrafter"/>
</dbReference>
<dbReference type="GO" id="GO:0005524">
    <property type="term" value="F:ATP binding"/>
    <property type="evidence" value="ECO:0007669"/>
    <property type="project" value="UniProtKB-KW"/>
</dbReference>
<dbReference type="GO" id="GO:0004592">
    <property type="term" value="F:pantoate-beta-alanine ligase activity"/>
    <property type="evidence" value="ECO:0007669"/>
    <property type="project" value="UniProtKB-UniRule"/>
</dbReference>
<dbReference type="GO" id="GO:0015940">
    <property type="term" value="P:pantothenate biosynthetic process"/>
    <property type="evidence" value="ECO:0007669"/>
    <property type="project" value="UniProtKB-UniRule"/>
</dbReference>
<dbReference type="CDD" id="cd00560">
    <property type="entry name" value="PanC"/>
    <property type="match status" value="1"/>
</dbReference>
<dbReference type="FunFam" id="3.40.50.620:FF:000114">
    <property type="entry name" value="Pantothenate synthetase"/>
    <property type="match status" value="1"/>
</dbReference>
<dbReference type="Gene3D" id="3.40.50.620">
    <property type="entry name" value="HUPs"/>
    <property type="match status" value="1"/>
</dbReference>
<dbReference type="Gene3D" id="3.30.1300.10">
    <property type="entry name" value="Pantoate-beta-alanine ligase, C-terminal domain"/>
    <property type="match status" value="1"/>
</dbReference>
<dbReference type="HAMAP" id="MF_00158">
    <property type="entry name" value="PanC"/>
    <property type="match status" value="1"/>
</dbReference>
<dbReference type="InterPro" id="IPR003721">
    <property type="entry name" value="Pantoate_ligase"/>
</dbReference>
<dbReference type="InterPro" id="IPR042176">
    <property type="entry name" value="Pantoate_ligase_C"/>
</dbReference>
<dbReference type="InterPro" id="IPR014729">
    <property type="entry name" value="Rossmann-like_a/b/a_fold"/>
</dbReference>
<dbReference type="NCBIfam" id="TIGR00018">
    <property type="entry name" value="panC"/>
    <property type="match status" value="1"/>
</dbReference>
<dbReference type="PANTHER" id="PTHR21299">
    <property type="entry name" value="CYTIDYLATE KINASE/PANTOATE-BETA-ALANINE LIGASE"/>
    <property type="match status" value="1"/>
</dbReference>
<dbReference type="PANTHER" id="PTHR21299:SF1">
    <property type="entry name" value="PANTOATE--BETA-ALANINE LIGASE"/>
    <property type="match status" value="1"/>
</dbReference>
<dbReference type="Pfam" id="PF02569">
    <property type="entry name" value="Pantoate_ligase"/>
    <property type="match status" value="1"/>
</dbReference>
<dbReference type="SUPFAM" id="SSF52374">
    <property type="entry name" value="Nucleotidylyl transferase"/>
    <property type="match status" value="1"/>
</dbReference>
<gene>
    <name evidence="1" type="primary">panC</name>
    <name type="ordered locus">MUL_4184</name>
</gene>
<feature type="chain" id="PRO_0000305492" description="Pantothenate synthetase">
    <location>
        <begin position="1"/>
        <end position="315"/>
    </location>
</feature>
<feature type="active site" description="Proton donor" evidence="1">
    <location>
        <position position="52"/>
    </location>
</feature>
<feature type="binding site" evidence="1">
    <location>
        <begin position="45"/>
        <end position="52"/>
    </location>
    <ligand>
        <name>ATP</name>
        <dbReference type="ChEBI" id="CHEBI:30616"/>
    </ligand>
</feature>
<feature type="binding site" evidence="1">
    <location>
        <position position="77"/>
    </location>
    <ligand>
        <name>(R)-pantoate</name>
        <dbReference type="ChEBI" id="CHEBI:15980"/>
    </ligand>
</feature>
<feature type="binding site" evidence="1">
    <location>
        <position position="77"/>
    </location>
    <ligand>
        <name>beta-alanine</name>
        <dbReference type="ChEBI" id="CHEBI:57966"/>
    </ligand>
</feature>
<feature type="binding site" evidence="1">
    <location>
        <begin position="163"/>
        <end position="166"/>
    </location>
    <ligand>
        <name>ATP</name>
        <dbReference type="ChEBI" id="CHEBI:30616"/>
    </ligand>
</feature>
<feature type="binding site" evidence="1">
    <location>
        <position position="169"/>
    </location>
    <ligand>
        <name>(R)-pantoate</name>
        <dbReference type="ChEBI" id="CHEBI:15980"/>
    </ligand>
</feature>
<feature type="binding site" evidence="1">
    <location>
        <position position="192"/>
    </location>
    <ligand>
        <name>ATP</name>
        <dbReference type="ChEBI" id="CHEBI:30616"/>
    </ligand>
</feature>
<feature type="binding site" evidence="1">
    <location>
        <begin position="200"/>
        <end position="203"/>
    </location>
    <ligand>
        <name>ATP</name>
        <dbReference type="ChEBI" id="CHEBI:30616"/>
    </ligand>
</feature>
<evidence type="ECO:0000255" key="1">
    <source>
        <dbReference type="HAMAP-Rule" id="MF_00158"/>
    </source>
</evidence>
<proteinExistence type="inferred from homology"/>
<protein>
    <recommendedName>
        <fullName evidence="1">Pantothenate synthetase</fullName>
        <shortName evidence="1">PS</shortName>
        <ecNumber evidence="1">6.3.2.1</ecNumber>
    </recommendedName>
    <alternativeName>
        <fullName evidence="1">Pantoate--beta-alanine ligase</fullName>
    </alternativeName>
    <alternativeName>
        <fullName evidence="1">Pantoate-activating enzyme</fullName>
    </alternativeName>
</protein>
<keyword id="KW-0067">ATP-binding</keyword>
<keyword id="KW-0963">Cytoplasm</keyword>
<keyword id="KW-0436">Ligase</keyword>
<keyword id="KW-0547">Nucleotide-binding</keyword>
<keyword id="KW-0566">Pantothenate biosynthesis</keyword>
<comment type="function">
    <text evidence="1">Catalyzes the condensation of pantoate with beta-alanine in an ATP-dependent reaction via a pantoyl-adenylate intermediate.</text>
</comment>
<comment type="catalytic activity">
    <reaction evidence="1">
        <text>(R)-pantoate + beta-alanine + ATP = (R)-pantothenate + AMP + diphosphate + H(+)</text>
        <dbReference type="Rhea" id="RHEA:10912"/>
        <dbReference type="ChEBI" id="CHEBI:15378"/>
        <dbReference type="ChEBI" id="CHEBI:15980"/>
        <dbReference type="ChEBI" id="CHEBI:29032"/>
        <dbReference type="ChEBI" id="CHEBI:30616"/>
        <dbReference type="ChEBI" id="CHEBI:33019"/>
        <dbReference type="ChEBI" id="CHEBI:57966"/>
        <dbReference type="ChEBI" id="CHEBI:456215"/>
        <dbReference type="EC" id="6.3.2.1"/>
    </reaction>
</comment>
<comment type="pathway">
    <text evidence="1">Cofactor biosynthesis; (R)-pantothenate biosynthesis; (R)-pantothenate from (R)-pantoate and beta-alanine: step 1/1.</text>
</comment>
<comment type="subunit">
    <text evidence="1">Homodimer.</text>
</comment>
<comment type="subcellular location">
    <subcellularLocation>
        <location evidence="1">Cytoplasm</location>
    </subcellularLocation>
</comment>
<comment type="miscellaneous">
    <text evidence="1">The reaction proceeds by a bi uni uni bi ping pong mechanism.</text>
</comment>
<comment type="similarity">
    <text evidence="1">Belongs to the pantothenate synthetase family.</text>
</comment>
<name>PANC_MYCUA</name>
<organism>
    <name type="scientific">Mycobacterium ulcerans (strain Agy99)</name>
    <dbReference type="NCBI Taxonomy" id="362242"/>
    <lineage>
        <taxon>Bacteria</taxon>
        <taxon>Bacillati</taxon>
        <taxon>Actinomycetota</taxon>
        <taxon>Actinomycetes</taxon>
        <taxon>Mycobacteriales</taxon>
        <taxon>Mycobacteriaceae</taxon>
        <taxon>Mycobacterium</taxon>
        <taxon>Mycobacterium ulcerans group</taxon>
    </lineage>
</organism>